<name>NPY2_CONBE</name>
<proteinExistence type="evidence at protein level"/>
<protein>
    <recommendedName>
        <fullName>Neuropeptide Y2-like conopeptide</fullName>
        <shortName evidence="2">Cono-NPY2</shortName>
        <shortName>NPY2-like conopeptide</shortName>
    </recommendedName>
</protein>
<reference key="1">
    <citation type="journal article" date="2010" name="Acta Biochim. Biophys. Sin.">
        <title>Identification of neuropeptide Y-like conopeptides from the venom of Conus betulinus.</title>
        <authorList>
            <person name="Wu X."/>
            <person name="Shao X."/>
            <person name="Guo Z.Y."/>
            <person name="Chi C.W."/>
        </authorList>
    </citation>
    <scope>PROTEIN SEQUENCE</scope>
    <scope>FUNCTION</scope>
    <scope>BIOASSAY</scope>
    <scope>MASS SPECTROMETRY</scope>
    <scope>AMIDATION AT TYR-37</scope>
    <scope>SUBCELLULAR LOCATION</scope>
    <source>
        <tissue>Venom</tissue>
    </source>
</reference>
<sequence length="37" mass="4365">TVSDPPARPAVFHSREELMNYVRELNLYFAIVGRPRY</sequence>
<organism>
    <name type="scientific">Conus betulinus</name>
    <name type="common">Beech cone</name>
    <dbReference type="NCBI Taxonomy" id="89764"/>
    <lineage>
        <taxon>Eukaryota</taxon>
        <taxon>Metazoa</taxon>
        <taxon>Spiralia</taxon>
        <taxon>Lophotrochozoa</taxon>
        <taxon>Mollusca</taxon>
        <taxon>Gastropoda</taxon>
        <taxon>Caenogastropoda</taxon>
        <taxon>Neogastropoda</taxon>
        <taxon>Conoidea</taxon>
        <taxon>Conidae</taxon>
        <taxon>Conus</taxon>
        <taxon>Dendroconus</taxon>
    </lineage>
</organism>
<accession>P0CJ23</accession>
<evidence type="ECO:0000269" key="1">
    <source>
    </source>
</evidence>
<evidence type="ECO:0000303" key="2">
    <source>
    </source>
</evidence>
<evidence type="ECO:0000305" key="3"/>
<evidence type="ECO:0000305" key="4">
    <source>
    </source>
</evidence>
<keyword id="KW-0027">Amidation</keyword>
<keyword id="KW-0903">Direct protein sequencing</keyword>
<keyword id="KW-0528">Neurotoxin</keyword>
<keyword id="KW-0964">Secreted</keyword>
<keyword id="KW-0800">Toxin</keyword>
<comment type="function">
    <text evidence="1">Causes hyperactivity such as jumping, rapid circling and tail flicking, after intraventicular injection into mouse brain.</text>
</comment>
<comment type="subcellular location">
    <subcellularLocation>
        <location evidence="1">Secreted</location>
    </subcellularLocation>
</comment>
<comment type="tissue specificity">
    <text evidence="4">Expressed by the venom duct.</text>
</comment>
<comment type="mass spectrometry" mass="4364.0" method="Unknown" evidence="1"/>
<comment type="miscellaneous">
    <text evidence="3">The mature peptide does not contain cysteine residue.</text>
</comment>
<comment type="similarity">
    <text evidence="3">Belongs to the NPY family.</text>
</comment>
<feature type="chain" id="PRO_0000405963" description="Neuropeptide Y2-like conopeptide" evidence="1">
    <location>
        <begin position="1"/>
        <end position="37"/>
    </location>
</feature>
<feature type="modified residue" description="Tyrosine amide" evidence="4">
    <location>
        <position position="37"/>
    </location>
</feature>
<dbReference type="SMR" id="P0CJ23"/>
<dbReference type="GO" id="GO:0005576">
    <property type="term" value="C:extracellular region"/>
    <property type="evidence" value="ECO:0007669"/>
    <property type="project" value="UniProtKB-SubCell"/>
</dbReference>
<dbReference type="GO" id="GO:0005179">
    <property type="term" value="F:hormone activity"/>
    <property type="evidence" value="ECO:0007669"/>
    <property type="project" value="InterPro"/>
</dbReference>
<dbReference type="GO" id="GO:0090729">
    <property type="term" value="F:toxin activity"/>
    <property type="evidence" value="ECO:0007669"/>
    <property type="project" value="UniProtKB-KW"/>
</dbReference>
<dbReference type="InterPro" id="IPR001955">
    <property type="entry name" value="Pancreatic_hormone-like"/>
</dbReference>
<dbReference type="InterPro" id="IPR020392">
    <property type="entry name" value="Pancreatic_hormone-like_CS"/>
</dbReference>
<dbReference type="Pfam" id="PF00159">
    <property type="entry name" value="Hormone_3"/>
    <property type="match status" value="1"/>
</dbReference>
<dbReference type="SMART" id="SM00309">
    <property type="entry name" value="PAH"/>
    <property type="match status" value="1"/>
</dbReference>
<dbReference type="PROSITE" id="PS00265">
    <property type="entry name" value="PANCREATIC_HORMONE_1"/>
    <property type="match status" value="1"/>
</dbReference>
<dbReference type="PROSITE" id="PS50276">
    <property type="entry name" value="PANCREATIC_HORMONE_2"/>
    <property type="match status" value="1"/>
</dbReference>